<proteinExistence type="inferred from homology"/>
<keyword id="KW-0028">Amino-acid biosynthesis</keyword>
<keyword id="KW-0067">ATP-binding</keyword>
<keyword id="KW-0963">Cytoplasm</keyword>
<keyword id="KW-0418">Kinase</keyword>
<keyword id="KW-0547">Nucleotide-binding</keyword>
<keyword id="KW-0641">Proline biosynthesis</keyword>
<keyword id="KW-1185">Reference proteome</keyword>
<keyword id="KW-0808">Transferase</keyword>
<sequence length="373" mass="40408">MSKRQLVTQSRRFVIKIGSALLTDNGRGLDQKAMAAWVEQIAALSKKGYEVVLVSSGAVAAGMTRLGWKSRPKAIHEQQAAAAVGQSLLIQAYEQEFQRYSKKIAQVLLDHDDLSSRQRYLNARSTLRTLMNLDVIPIINENDTVVTDEIRFGDNDTLAALVANLIEADILCILTDQKGMFDSDPRQNALAELLFEKPALSPELDNMATSGGALGRGGMISKVRAARLAARSGASTVIVGGKIPDVLPKVANGDMIGTLLYADQQPIAARKRWLAGQLQSRGVVTLDDGAVSVLRDKGKSLLPVGVKAVSGHFTRGDMVVCKDARGAEIARGLVNYNSDDARKIMGQPTTKIETLLGYKDFDELIHRDNLVLS</sequence>
<evidence type="ECO:0000255" key="1">
    <source>
        <dbReference type="HAMAP-Rule" id="MF_00456"/>
    </source>
</evidence>
<organism>
    <name type="scientific">Teredinibacter turnerae (strain ATCC 39867 / T7901)</name>
    <dbReference type="NCBI Taxonomy" id="377629"/>
    <lineage>
        <taxon>Bacteria</taxon>
        <taxon>Pseudomonadati</taxon>
        <taxon>Pseudomonadota</taxon>
        <taxon>Gammaproteobacteria</taxon>
        <taxon>Cellvibrionales</taxon>
        <taxon>Cellvibrionaceae</taxon>
        <taxon>Teredinibacter</taxon>
    </lineage>
</organism>
<reference key="1">
    <citation type="journal article" date="2009" name="PLoS ONE">
        <title>The complete genome of Teredinibacter turnerae T7901: an intracellular endosymbiont of marine wood-boring bivalves (shipworms).</title>
        <authorList>
            <person name="Yang J.C."/>
            <person name="Madupu R."/>
            <person name="Durkin A.S."/>
            <person name="Ekborg N.A."/>
            <person name="Pedamallu C.S."/>
            <person name="Hostetler J.B."/>
            <person name="Radune D."/>
            <person name="Toms B.S."/>
            <person name="Henrissat B."/>
            <person name="Coutinho P.M."/>
            <person name="Schwarz S."/>
            <person name="Field L."/>
            <person name="Trindade-Silva A.E."/>
            <person name="Soares C.A.G."/>
            <person name="Elshahawi S."/>
            <person name="Hanora A."/>
            <person name="Schmidt E.W."/>
            <person name="Haygood M.G."/>
            <person name="Posfai J."/>
            <person name="Benner J."/>
            <person name="Madinger C."/>
            <person name="Nove J."/>
            <person name="Anton B."/>
            <person name="Chaudhary K."/>
            <person name="Foster J."/>
            <person name="Holman A."/>
            <person name="Kumar S."/>
            <person name="Lessard P.A."/>
            <person name="Luyten Y.A."/>
            <person name="Slatko B."/>
            <person name="Wood N."/>
            <person name="Wu B."/>
            <person name="Teplitski M."/>
            <person name="Mougous J.D."/>
            <person name="Ward N."/>
            <person name="Eisen J.A."/>
            <person name="Badger J.H."/>
            <person name="Distel D.L."/>
        </authorList>
    </citation>
    <scope>NUCLEOTIDE SEQUENCE [LARGE SCALE GENOMIC DNA]</scope>
    <source>
        <strain>ATCC 39867 / T7901</strain>
    </source>
</reference>
<accession>C5BQB5</accession>
<dbReference type="EC" id="2.7.2.11" evidence="1"/>
<dbReference type="EMBL" id="CP001614">
    <property type="protein sequence ID" value="ACR12965.1"/>
    <property type="molecule type" value="Genomic_DNA"/>
</dbReference>
<dbReference type="RefSeq" id="WP_015819078.1">
    <property type="nucleotide sequence ID" value="NC_012997.1"/>
</dbReference>
<dbReference type="SMR" id="C5BQB5"/>
<dbReference type="STRING" id="377629.TERTU_0963"/>
<dbReference type="KEGG" id="ttu:TERTU_0963"/>
<dbReference type="eggNOG" id="COG0263">
    <property type="taxonomic scope" value="Bacteria"/>
</dbReference>
<dbReference type="HOGENOM" id="CLU_025400_2_0_6"/>
<dbReference type="OrthoDB" id="9804434at2"/>
<dbReference type="UniPathway" id="UPA00098">
    <property type="reaction ID" value="UER00359"/>
</dbReference>
<dbReference type="Proteomes" id="UP000009080">
    <property type="component" value="Chromosome"/>
</dbReference>
<dbReference type="GO" id="GO:0005829">
    <property type="term" value="C:cytosol"/>
    <property type="evidence" value="ECO:0007669"/>
    <property type="project" value="TreeGrafter"/>
</dbReference>
<dbReference type="GO" id="GO:0005524">
    <property type="term" value="F:ATP binding"/>
    <property type="evidence" value="ECO:0007669"/>
    <property type="project" value="UniProtKB-KW"/>
</dbReference>
<dbReference type="GO" id="GO:0004349">
    <property type="term" value="F:glutamate 5-kinase activity"/>
    <property type="evidence" value="ECO:0007669"/>
    <property type="project" value="UniProtKB-UniRule"/>
</dbReference>
<dbReference type="GO" id="GO:0003723">
    <property type="term" value="F:RNA binding"/>
    <property type="evidence" value="ECO:0007669"/>
    <property type="project" value="InterPro"/>
</dbReference>
<dbReference type="GO" id="GO:0055129">
    <property type="term" value="P:L-proline biosynthetic process"/>
    <property type="evidence" value="ECO:0007669"/>
    <property type="project" value="UniProtKB-UniRule"/>
</dbReference>
<dbReference type="CDD" id="cd04242">
    <property type="entry name" value="AAK_G5K_ProB"/>
    <property type="match status" value="1"/>
</dbReference>
<dbReference type="CDD" id="cd21157">
    <property type="entry name" value="PUA_G5K"/>
    <property type="match status" value="1"/>
</dbReference>
<dbReference type="FunFam" id="2.30.130.10:FF:000007">
    <property type="entry name" value="Glutamate 5-kinase"/>
    <property type="match status" value="1"/>
</dbReference>
<dbReference type="FunFam" id="3.40.1160.10:FF:000018">
    <property type="entry name" value="Glutamate 5-kinase"/>
    <property type="match status" value="1"/>
</dbReference>
<dbReference type="Gene3D" id="3.40.1160.10">
    <property type="entry name" value="Acetylglutamate kinase-like"/>
    <property type="match status" value="2"/>
</dbReference>
<dbReference type="Gene3D" id="2.30.130.10">
    <property type="entry name" value="PUA domain"/>
    <property type="match status" value="1"/>
</dbReference>
<dbReference type="HAMAP" id="MF_00456">
    <property type="entry name" value="ProB"/>
    <property type="match status" value="1"/>
</dbReference>
<dbReference type="InterPro" id="IPR036393">
    <property type="entry name" value="AceGlu_kinase-like_sf"/>
</dbReference>
<dbReference type="InterPro" id="IPR001048">
    <property type="entry name" value="Asp/Glu/Uridylate_kinase"/>
</dbReference>
<dbReference type="InterPro" id="IPR041739">
    <property type="entry name" value="G5K_ProB"/>
</dbReference>
<dbReference type="InterPro" id="IPR001057">
    <property type="entry name" value="Glu/AcGlu_kinase"/>
</dbReference>
<dbReference type="InterPro" id="IPR011529">
    <property type="entry name" value="Glu_5kinase"/>
</dbReference>
<dbReference type="InterPro" id="IPR005715">
    <property type="entry name" value="Glu_5kinase/COase_Synthase"/>
</dbReference>
<dbReference type="InterPro" id="IPR019797">
    <property type="entry name" value="Glutamate_5-kinase_CS"/>
</dbReference>
<dbReference type="InterPro" id="IPR002478">
    <property type="entry name" value="PUA"/>
</dbReference>
<dbReference type="InterPro" id="IPR015947">
    <property type="entry name" value="PUA-like_sf"/>
</dbReference>
<dbReference type="InterPro" id="IPR036974">
    <property type="entry name" value="PUA_sf"/>
</dbReference>
<dbReference type="NCBIfam" id="TIGR01027">
    <property type="entry name" value="proB"/>
    <property type="match status" value="1"/>
</dbReference>
<dbReference type="PANTHER" id="PTHR43654">
    <property type="entry name" value="GLUTAMATE 5-KINASE"/>
    <property type="match status" value="1"/>
</dbReference>
<dbReference type="PANTHER" id="PTHR43654:SF1">
    <property type="entry name" value="ISOPENTENYL PHOSPHATE KINASE"/>
    <property type="match status" value="1"/>
</dbReference>
<dbReference type="Pfam" id="PF00696">
    <property type="entry name" value="AA_kinase"/>
    <property type="match status" value="1"/>
</dbReference>
<dbReference type="Pfam" id="PF01472">
    <property type="entry name" value="PUA"/>
    <property type="match status" value="1"/>
</dbReference>
<dbReference type="PIRSF" id="PIRSF000729">
    <property type="entry name" value="GK"/>
    <property type="match status" value="1"/>
</dbReference>
<dbReference type="PRINTS" id="PR00474">
    <property type="entry name" value="GLU5KINASE"/>
</dbReference>
<dbReference type="SMART" id="SM00359">
    <property type="entry name" value="PUA"/>
    <property type="match status" value="1"/>
</dbReference>
<dbReference type="SUPFAM" id="SSF53633">
    <property type="entry name" value="Carbamate kinase-like"/>
    <property type="match status" value="1"/>
</dbReference>
<dbReference type="SUPFAM" id="SSF88697">
    <property type="entry name" value="PUA domain-like"/>
    <property type="match status" value="1"/>
</dbReference>
<dbReference type="PROSITE" id="PS00902">
    <property type="entry name" value="GLUTAMATE_5_KINASE"/>
    <property type="match status" value="1"/>
</dbReference>
<dbReference type="PROSITE" id="PS50890">
    <property type="entry name" value="PUA"/>
    <property type="match status" value="1"/>
</dbReference>
<comment type="function">
    <text evidence="1">Catalyzes the transfer of a phosphate group to glutamate to form L-glutamate 5-phosphate.</text>
</comment>
<comment type="catalytic activity">
    <reaction evidence="1">
        <text>L-glutamate + ATP = L-glutamyl 5-phosphate + ADP</text>
        <dbReference type="Rhea" id="RHEA:14877"/>
        <dbReference type="ChEBI" id="CHEBI:29985"/>
        <dbReference type="ChEBI" id="CHEBI:30616"/>
        <dbReference type="ChEBI" id="CHEBI:58274"/>
        <dbReference type="ChEBI" id="CHEBI:456216"/>
        <dbReference type="EC" id="2.7.2.11"/>
    </reaction>
</comment>
<comment type="pathway">
    <text evidence="1">Amino-acid biosynthesis; L-proline biosynthesis; L-glutamate 5-semialdehyde from L-glutamate: step 1/2.</text>
</comment>
<comment type="subcellular location">
    <subcellularLocation>
        <location evidence="1">Cytoplasm</location>
    </subcellularLocation>
</comment>
<comment type="similarity">
    <text evidence="1">Belongs to the glutamate 5-kinase family.</text>
</comment>
<protein>
    <recommendedName>
        <fullName evidence="1">Glutamate 5-kinase</fullName>
        <ecNumber evidence="1">2.7.2.11</ecNumber>
    </recommendedName>
    <alternativeName>
        <fullName evidence="1">Gamma-glutamyl kinase</fullName>
        <shortName evidence="1">GK</shortName>
    </alternativeName>
</protein>
<feature type="chain" id="PRO_1000206278" description="Glutamate 5-kinase">
    <location>
        <begin position="1"/>
        <end position="373"/>
    </location>
</feature>
<feature type="domain" description="PUA" evidence="1">
    <location>
        <begin position="281"/>
        <end position="359"/>
    </location>
</feature>
<feature type="binding site" evidence="1">
    <location>
        <position position="16"/>
    </location>
    <ligand>
        <name>ATP</name>
        <dbReference type="ChEBI" id="CHEBI:30616"/>
    </ligand>
</feature>
<feature type="binding site" evidence="1">
    <location>
        <position position="56"/>
    </location>
    <ligand>
        <name>substrate</name>
    </ligand>
</feature>
<feature type="binding site" evidence="1">
    <location>
        <position position="143"/>
    </location>
    <ligand>
        <name>substrate</name>
    </ligand>
</feature>
<feature type="binding site" evidence="1">
    <location>
        <position position="155"/>
    </location>
    <ligand>
        <name>substrate</name>
    </ligand>
</feature>
<feature type="binding site" evidence="1">
    <location>
        <begin position="175"/>
        <end position="176"/>
    </location>
    <ligand>
        <name>ATP</name>
        <dbReference type="ChEBI" id="CHEBI:30616"/>
    </ligand>
</feature>
<name>PROB_TERTT</name>
<gene>
    <name evidence="1" type="primary">proB</name>
    <name type="ordered locus">TERTU_0963</name>
</gene>